<accession>A4IZR5</accession>
<feature type="chain" id="PRO_1000054465" description="Large ribosomal subunit protein uL15">
    <location>
        <begin position="1"/>
        <end position="143"/>
    </location>
</feature>
<feature type="region of interest" description="Disordered" evidence="2">
    <location>
        <begin position="1"/>
        <end position="52"/>
    </location>
</feature>
<feature type="compositionally biased region" description="Gly residues" evidence="2">
    <location>
        <begin position="21"/>
        <end position="31"/>
    </location>
</feature>
<comment type="function">
    <text evidence="1">Binds to the 23S rRNA.</text>
</comment>
<comment type="subunit">
    <text evidence="1">Part of the 50S ribosomal subunit.</text>
</comment>
<comment type="similarity">
    <text evidence="1">Belongs to the universal ribosomal protein uL15 family.</text>
</comment>
<organism>
    <name type="scientific">Francisella tularensis subsp. tularensis (strain WY96-3418)</name>
    <dbReference type="NCBI Taxonomy" id="418136"/>
    <lineage>
        <taxon>Bacteria</taxon>
        <taxon>Pseudomonadati</taxon>
        <taxon>Pseudomonadota</taxon>
        <taxon>Gammaproteobacteria</taxon>
        <taxon>Thiotrichales</taxon>
        <taxon>Francisellaceae</taxon>
        <taxon>Francisella</taxon>
    </lineage>
</organism>
<name>RL15_FRATW</name>
<proteinExistence type="inferred from homology"/>
<reference key="1">
    <citation type="journal article" date="2007" name="PLoS ONE">
        <title>Complete genomic characterization of a pathogenic A.II strain of Francisella tularensis subspecies tularensis.</title>
        <authorList>
            <person name="Beckstrom-Sternberg S.M."/>
            <person name="Auerbach R.K."/>
            <person name="Godbole S."/>
            <person name="Pearson J.V."/>
            <person name="Beckstrom-Sternberg J.S."/>
            <person name="Deng Z."/>
            <person name="Munk C."/>
            <person name="Kubota K."/>
            <person name="Zhou Y."/>
            <person name="Bruce D."/>
            <person name="Noronha J."/>
            <person name="Scheuermann R.H."/>
            <person name="Wang A."/>
            <person name="Wei X."/>
            <person name="Wang J."/>
            <person name="Hao J."/>
            <person name="Wagner D.M."/>
            <person name="Brettin T.S."/>
            <person name="Brown N."/>
            <person name="Gilna P."/>
            <person name="Keim P.S."/>
        </authorList>
    </citation>
    <scope>NUCLEOTIDE SEQUENCE [LARGE SCALE GENOMIC DNA]</scope>
    <source>
        <strain>WY96-3418</strain>
    </source>
</reference>
<gene>
    <name evidence="1" type="primary">rplO</name>
    <name type="ordered locus">FTW_1739</name>
</gene>
<dbReference type="EMBL" id="CP000608">
    <property type="protein sequence ID" value="ABO47415.1"/>
    <property type="molecule type" value="Genomic_DNA"/>
</dbReference>
<dbReference type="RefSeq" id="WP_003021585.1">
    <property type="nucleotide sequence ID" value="NC_009257.1"/>
</dbReference>
<dbReference type="SMR" id="A4IZR5"/>
<dbReference type="KEGG" id="ftw:FTW_1739"/>
<dbReference type="HOGENOM" id="CLU_055188_4_2_6"/>
<dbReference type="GO" id="GO:0022625">
    <property type="term" value="C:cytosolic large ribosomal subunit"/>
    <property type="evidence" value="ECO:0007669"/>
    <property type="project" value="TreeGrafter"/>
</dbReference>
<dbReference type="GO" id="GO:0019843">
    <property type="term" value="F:rRNA binding"/>
    <property type="evidence" value="ECO:0007669"/>
    <property type="project" value="UniProtKB-UniRule"/>
</dbReference>
<dbReference type="GO" id="GO:0003735">
    <property type="term" value="F:structural constituent of ribosome"/>
    <property type="evidence" value="ECO:0007669"/>
    <property type="project" value="InterPro"/>
</dbReference>
<dbReference type="GO" id="GO:0006412">
    <property type="term" value="P:translation"/>
    <property type="evidence" value="ECO:0007669"/>
    <property type="project" value="UniProtKB-UniRule"/>
</dbReference>
<dbReference type="Gene3D" id="3.100.10.10">
    <property type="match status" value="1"/>
</dbReference>
<dbReference type="HAMAP" id="MF_01341">
    <property type="entry name" value="Ribosomal_uL15"/>
    <property type="match status" value="1"/>
</dbReference>
<dbReference type="InterPro" id="IPR030878">
    <property type="entry name" value="Ribosomal_uL15"/>
</dbReference>
<dbReference type="InterPro" id="IPR021131">
    <property type="entry name" value="Ribosomal_uL15/eL18"/>
</dbReference>
<dbReference type="InterPro" id="IPR036227">
    <property type="entry name" value="Ribosomal_uL15/eL18_sf"/>
</dbReference>
<dbReference type="InterPro" id="IPR005749">
    <property type="entry name" value="Ribosomal_uL15_bac-type"/>
</dbReference>
<dbReference type="InterPro" id="IPR001196">
    <property type="entry name" value="Ribosomal_uL15_CS"/>
</dbReference>
<dbReference type="NCBIfam" id="TIGR01071">
    <property type="entry name" value="rplO_bact"/>
    <property type="match status" value="1"/>
</dbReference>
<dbReference type="PANTHER" id="PTHR12934">
    <property type="entry name" value="50S RIBOSOMAL PROTEIN L15"/>
    <property type="match status" value="1"/>
</dbReference>
<dbReference type="PANTHER" id="PTHR12934:SF11">
    <property type="entry name" value="LARGE RIBOSOMAL SUBUNIT PROTEIN UL15M"/>
    <property type="match status" value="1"/>
</dbReference>
<dbReference type="Pfam" id="PF00828">
    <property type="entry name" value="Ribosomal_L27A"/>
    <property type="match status" value="1"/>
</dbReference>
<dbReference type="SUPFAM" id="SSF52080">
    <property type="entry name" value="Ribosomal proteins L15p and L18e"/>
    <property type="match status" value="1"/>
</dbReference>
<dbReference type="PROSITE" id="PS00475">
    <property type="entry name" value="RIBOSOMAL_L15"/>
    <property type="match status" value="1"/>
</dbReference>
<evidence type="ECO:0000255" key="1">
    <source>
        <dbReference type="HAMAP-Rule" id="MF_01341"/>
    </source>
</evidence>
<evidence type="ECO:0000256" key="2">
    <source>
        <dbReference type="SAM" id="MobiDB-lite"/>
    </source>
</evidence>
<evidence type="ECO:0000305" key="3"/>
<keyword id="KW-0687">Ribonucleoprotein</keyword>
<keyword id="KW-0689">Ribosomal protein</keyword>
<keyword id="KW-0694">RNA-binding</keyword>
<keyword id="KW-0699">rRNA-binding</keyword>
<protein>
    <recommendedName>
        <fullName evidence="1">Large ribosomal subunit protein uL15</fullName>
    </recommendedName>
    <alternativeName>
        <fullName evidence="3">50S ribosomal protein L15</fullName>
    </alternativeName>
</protein>
<sequence length="143" mass="15000">MKLNTLAPAAGSKSAPKRLGRGIGSGLGKTSGKGHKGQKARSGGYHKVGFEGGQMPLQRRLPKFGFTSASKGYVAEIRLHELNNVVADEVTLDTLKDFGLIRKDIKTVKVIASGEIQKAVSLKGIACTKGAKEAIEKAGGKVE</sequence>